<dbReference type="EMBL" id="CP000518">
    <property type="protein sequence ID" value="ABL92521.1"/>
    <property type="molecule type" value="Genomic_DNA"/>
</dbReference>
<dbReference type="SMR" id="A1UI63"/>
<dbReference type="STRING" id="189918.Mkms_3327"/>
<dbReference type="KEGG" id="mkm:Mkms_3327"/>
<dbReference type="HOGENOM" id="CLU_107907_0_5_11"/>
<dbReference type="OrthoDB" id="9807753at2"/>
<dbReference type="GO" id="GO:0005737">
    <property type="term" value="C:cytoplasm"/>
    <property type="evidence" value="ECO:0007669"/>
    <property type="project" value="UniProtKB-UniRule"/>
</dbReference>
<dbReference type="GO" id="GO:0009295">
    <property type="term" value="C:nucleoid"/>
    <property type="evidence" value="ECO:0007669"/>
    <property type="project" value="UniProtKB-SubCell"/>
</dbReference>
<dbReference type="GO" id="GO:0003700">
    <property type="term" value="F:DNA-binding transcription factor activity"/>
    <property type="evidence" value="ECO:0007669"/>
    <property type="project" value="UniProtKB-UniRule"/>
</dbReference>
<dbReference type="GO" id="GO:0000976">
    <property type="term" value="F:transcription cis-regulatory region binding"/>
    <property type="evidence" value="ECO:0007669"/>
    <property type="project" value="TreeGrafter"/>
</dbReference>
<dbReference type="GO" id="GO:2000143">
    <property type="term" value="P:negative regulation of DNA-templated transcription initiation"/>
    <property type="evidence" value="ECO:0007669"/>
    <property type="project" value="TreeGrafter"/>
</dbReference>
<dbReference type="CDD" id="cd16321">
    <property type="entry name" value="MraZ_C"/>
    <property type="match status" value="1"/>
</dbReference>
<dbReference type="CDD" id="cd16320">
    <property type="entry name" value="MraZ_N"/>
    <property type="match status" value="1"/>
</dbReference>
<dbReference type="Gene3D" id="3.40.1550.20">
    <property type="entry name" value="Transcriptional regulator MraZ domain"/>
    <property type="match status" value="1"/>
</dbReference>
<dbReference type="HAMAP" id="MF_01008">
    <property type="entry name" value="MraZ"/>
    <property type="match status" value="1"/>
</dbReference>
<dbReference type="InterPro" id="IPR003444">
    <property type="entry name" value="MraZ"/>
</dbReference>
<dbReference type="InterPro" id="IPR035644">
    <property type="entry name" value="MraZ_C"/>
</dbReference>
<dbReference type="InterPro" id="IPR020603">
    <property type="entry name" value="MraZ_dom"/>
</dbReference>
<dbReference type="InterPro" id="IPR035642">
    <property type="entry name" value="MraZ_N"/>
</dbReference>
<dbReference type="InterPro" id="IPR038619">
    <property type="entry name" value="MraZ_sf"/>
</dbReference>
<dbReference type="InterPro" id="IPR007159">
    <property type="entry name" value="SpoVT-AbrB_dom"/>
</dbReference>
<dbReference type="InterPro" id="IPR037914">
    <property type="entry name" value="SpoVT-AbrB_sf"/>
</dbReference>
<dbReference type="NCBIfam" id="TIGR00242">
    <property type="entry name" value="division/cell wall cluster transcriptional repressor MraZ"/>
    <property type="match status" value="1"/>
</dbReference>
<dbReference type="PANTHER" id="PTHR34701">
    <property type="entry name" value="TRANSCRIPTIONAL REGULATOR MRAZ"/>
    <property type="match status" value="1"/>
</dbReference>
<dbReference type="PANTHER" id="PTHR34701:SF1">
    <property type="entry name" value="TRANSCRIPTIONAL REGULATOR MRAZ"/>
    <property type="match status" value="1"/>
</dbReference>
<dbReference type="Pfam" id="PF02381">
    <property type="entry name" value="MraZ"/>
    <property type="match status" value="2"/>
</dbReference>
<dbReference type="SUPFAM" id="SSF89447">
    <property type="entry name" value="AbrB/MazE/MraZ-like"/>
    <property type="match status" value="1"/>
</dbReference>
<dbReference type="PROSITE" id="PS51740">
    <property type="entry name" value="SPOVT_ABRB"/>
    <property type="match status" value="2"/>
</dbReference>
<gene>
    <name evidence="1" type="primary">mraZ</name>
    <name type="ordered locus">Mkms_3327</name>
</gene>
<evidence type="ECO:0000255" key="1">
    <source>
        <dbReference type="HAMAP-Rule" id="MF_01008"/>
    </source>
</evidence>
<evidence type="ECO:0000255" key="2">
    <source>
        <dbReference type="PROSITE-ProRule" id="PRU01076"/>
    </source>
</evidence>
<keyword id="KW-0963">Cytoplasm</keyword>
<keyword id="KW-0238">DNA-binding</keyword>
<keyword id="KW-0677">Repeat</keyword>
<keyword id="KW-0804">Transcription</keyword>
<keyword id="KW-0805">Transcription regulation</keyword>
<feature type="chain" id="PRO_1000062900" description="Transcriptional regulator MraZ">
    <location>
        <begin position="1"/>
        <end position="143"/>
    </location>
</feature>
<feature type="domain" description="SpoVT-AbrB 1" evidence="2">
    <location>
        <begin position="5"/>
        <end position="47"/>
    </location>
</feature>
<feature type="domain" description="SpoVT-AbrB 2" evidence="2">
    <location>
        <begin position="76"/>
        <end position="119"/>
    </location>
</feature>
<protein>
    <recommendedName>
        <fullName>Transcriptional regulator MraZ</fullName>
    </recommendedName>
</protein>
<organism>
    <name type="scientific">Mycobacterium sp. (strain KMS)</name>
    <dbReference type="NCBI Taxonomy" id="189918"/>
    <lineage>
        <taxon>Bacteria</taxon>
        <taxon>Bacillati</taxon>
        <taxon>Actinomycetota</taxon>
        <taxon>Actinomycetes</taxon>
        <taxon>Mycobacteriales</taxon>
        <taxon>Mycobacteriaceae</taxon>
        <taxon>Mycobacterium</taxon>
    </lineage>
</organism>
<name>MRAZ_MYCSK</name>
<comment type="subunit">
    <text evidence="1">Forms oligomers.</text>
</comment>
<comment type="subcellular location">
    <subcellularLocation>
        <location evidence="1">Cytoplasm</location>
        <location evidence="1">Nucleoid</location>
    </subcellularLocation>
</comment>
<comment type="similarity">
    <text evidence="1">Belongs to the MraZ family.</text>
</comment>
<sequence length="143" mass="16013">MFLGTYTPKLDDKGRLTLPAKFRDALAGGLMVTKSQDHSLAVYPRAEFEKLARRASQASRSNPEARAFLRNLAAATDEQHPDAQGRITLSADHRRYASLSKECVVIGSVDYLEIWDAAAWQEYQQAHEENFSAATDETLRDII</sequence>
<proteinExistence type="inferred from homology"/>
<accession>A1UI63</accession>
<reference key="1">
    <citation type="submission" date="2006-12" db="EMBL/GenBank/DDBJ databases">
        <title>Complete sequence of chromosome of Mycobacterium sp. KMS.</title>
        <authorList>
            <consortium name="US DOE Joint Genome Institute"/>
            <person name="Copeland A."/>
            <person name="Lucas S."/>
            <person name="Lapidus A."/>
            <person name="Barry K."/>
            <person name="Detter J.C."/>
            <person name="Glavina del Rio T."/>
            <person name="Hammon N."/>
            <person name="Israni S."/>
            <person name="Dalin E."/>
            <person name="Tice H."/>
            <person name="Pitluck S."/>
            <person name="Kiss H."/>
            <person name="Brettin T."/>
            <person name="Bruce D."/>
            <person name="Han C."/>
            <person name="Tapia R."/>
            <person name="Gilna P."/>
            <person name="Schmutz J."/>
            <person name="Larimer F."/>
            <person name="Land M."/>
            <person name="Hauser L."/>
            <person name="Kyrpides N."/>
            <person name="Mikhailova N."/>
            <person name="Miller C.D."/>
            <person name="Richardson P."/>
        </authorList>
    </citation>
    <scope>NUCLEOTIDE SEQUENCE [LARGE SCALE GENOMIC DNA]</scope>
    <source>
        <strain>KMS</strain>
    </source>
</reference>